<evidence type="ECO:0000255" key="1">
    <source>
        <dbReference type="HAMAP-Rule" id="MF_01521"/>
    </source>
</evidence>
<comment type="function">
    <text evidence="1">Probably functions as a manganese efflux pump.</text>
</comment>
<comment type="subcellular location">
    <subcellularLocation>
        <location evidence="1">Cell membrane</location>
        <topology evidence="1">Multi-pass membrane protein</topology>
    </subcellularLocation>
</comment>
<comment type="similarity">
    <text evidence="1">Belongs to the MntP (TC 9.B.29) family.</text>
</comment>
<sequence>MDLLTSSLIGIGLSMDCFAVALAIGTSERLPLVRSALVIAASFGIFQAGMTIAGWIAGASLYTEISSYGSWIAFLLLAGIGIKMIYDGIREEHEPTLSGLHAIPVILLSLATSIDAFAAGVSFGVLGSTVLMPALAIGLVCFVVSCAGVFCGMRLEKLLGNRTEIFGGVILILIGIQILTDILPL</sequence>
<name>MNTP_METB6</name>
<protein>
    <recommendedName>
        <fullName evidence="1">Putative manganese efflux pump MntP</fullName>
    </recommendedName>
</protein>
<reference key="1">
    <citation type="journal article" date="2015" name="Microbiology">
        <title>Genome of Methanoregula boonei 6A8 reveals adaptations to oligotrophic peatland environments.</title>
        <authorList>
            <person name="Braeuer S."/>
            <person name="Cadillo-Quiroz H."/>
            <person name="Kyrpides N."/>
            <person name="Woyke T."/>
            <person name="Goodwin L."/>
            <person name="Detter C."/>
            <person name="Podell S."/>
            <person name="Yavitt J.B."/>
            <person name="Zinder S.H."/>
        </authorList>
    </citation>
    <scope>NUCLEOTIDE SEQUENCE [LARGE SCALE GENOMIC DNA]</scope>
    <source>
        <strain>DSM 21154 / JCM 14090 / 6A8</strain>
    </source>
</reference>
<dbReference type="EMBL" id="CP000780">
    <property type="protein sequence ID" value="ABS55125.1"/>
    <property type="molecule type" value="Genomic_DNA"/>
</dbReference>
<dbReference type="RefSeq" id="WP_012106146.1">
    <property type="nucleotide sequence ID" value="NC_009712.1"/>
</dbReference>
<dbReference type="STRING" id="456442.Mboo_0607"/>
<dbReference type="GeneID" id="5412167"/>
<dbReference type="KEGG" id="mbn:Mboo_0607"/>
<dbReference type="eggNOG" id="arCOG04898">
    <property type="taxonomic scope" value="Archaea"/>
</dbReference>
<dbReference type="HOGENOM" id="CLU_096410_3_0_2"/>
<dbReference type="OrthoDB" id="53356at2157"/>
<dbReference type="Proteomes" id="UP000002408">
    <property type="component" value="Chromosome"/>
</dbReference>
<dbReference type="GO" id="GO:0005886">
    <property type="term" value="C:plasma membrane"/>
    <property type="evidence" value="ECO:0007669"/>
    <property type="project" value="UniProtKB-SubCell"/>
</dbReference>
<dbReference type="GO" id="GO:0005384">
    <property type="term" value="F:manganese ion transmembrane transporter activity"/>
    <property type="evidence" value="ECO:0007669"/>
    <property type="project" value="UniProtKB-UniRule"/>
</dbReference>
<dbReference type="HAMAP" id="MF_01521">
    <property type="entry name" value="MntP_pump"/>
    <property type="match status" value="1"/>
</dbReference>
<dbReference type="InterPro" id="IPR003810">
    <property type="entry name" value="Mntp/YtaF"/>
</dbReference>
<dbReference type="InterPro" id="IPR022929">
    <property type="entry name" value="Put_MntP"/>
</dbReference>
<dbReference type="PANTHER" id="PTHR35529">
    <property type="entry name" value="MANGANESE EFFLUX PUMP MNTP-RELATED"/>
    <property type="match status" value="1"/>
</dbReference>
<dbReference type="PANTHER" id="PTHR35529:SF1">
    <property type="entry name" value="MANGANESE EFFLUX PUMP MNTP-RELATED"/>
    <property type="match status" value="1"/>
</dbReference>
<dbReference type="Pfam" id="PF02659">
    <property type="entry name" value="Mntp"/>
    <property type="match status" value="1"/>
</dbReference>
<gene>
    <name evidence="1" type="primary">mntP</name>
    <name type="ordered locus">Mboo_0607</name>
</gene>
<keyword id="KW-1003">Cell membrane</keyword>
<keyword id="KW-0406">Ion transport</keyword>
<keyword id="KW-0464">Manganese</keyword>
<keyword id="KW-0472">Membrane</keyword>
<keyword id="KW-1185">Reference proteome</keyword>
<keyword id="KW-0812">Transmembrane</keyword>
<keyword id="KW-1133">Transmembrane helix</keyword>
<keyword id="KW-0813">Transport</keyword>
<feature type="chain" id="PRO_1000068637" description="Putative manganese efflux pump MntP">
    <location>
        <begin position="1"/>
        <end position="185"/>
    </location>
</feature>
<feature type="transmembrane region" description="Helical" evidence="1">
    <location>
        <begin position="4"/>
        <end position="24"/>
    </location>
</feature>
<feature type="transmembrane region" description="Helical" evidence="1">
    <location>
        <begin position="36"/>
        <end position="56"/>
    </location>
</feature>
<feature type="transmembrane region" description="Helical" evidence="1">
    <location>
        <begin position="65"/>
        <end position="85"/>
    </location>
</feature>
<feature type="transmembrane region" description="Helical" evidence="1">
    <location>
        <begin position="105"/>
        <end position="125"/>
    </location>
</feature>
<feature type="transmembrane region" description="Helical" evidence="1">
    <location>
        <begin position="130"/>
        <end position="150"/>
    </location>
</feature>
<feature type="transmembrane region" description="Helical" evidence="1">
    <location>
        <begin position="165"/>
        <end position="185"/>
    </location>
</feature>
<accession>A7I5W4</accession>
<organism>
    <name type="scientific">Methanoregula boonei (strain DSM 21154 / JCM 14090 / 6A8)</name>
    <dbReference type="NCBI Taxonomy" id="456442"/>
    <lineage>
        <taxon>Archaea</taxon>
        <taxon>Methanobacteriati</taxon>
        <taxon>Methanobacteriota</taxon>
        <taxon>Stenosarchaea group</taxon>
        <taxon>Methanomicrobia</taxon>
        <taxon>Methanomicrobiales</taxon>
        <taxon>Methanoregulaceae</taxon>
        <taxon>Methanoregula</taxon>
    </lineage>
</organism>
<proteinExistence type="inferred from homology"/>